<organism>
    <name type="scientific">Escherichia coli O103:H2 (strain 12009 / EHEC)</name>
    <dbReference type="NCBI Taxonomy" id="585395"/>
    <lineage>
        <taxon>Bacteria</taxon>
        <taxon>Pseudomonadati</taxon>
        <taxon>Pseudomonadota</taxon>
        <taxon>Gammaproteobacteria</taxon>
        <taxon>Enterobacterales</taxon>
        <taxon>Enterobacteriaceae</taxon>
        <taxon>Escherichia</taxon>
    </lineage>
</organism>
<accession>C8U5H1</accession>
<proteinExistence type="evidence at transcript level"/>
<gene>
    <name evidence="1" type="primary">rutD</name>
    <name type="synonym">rarA</name>
    <name type="ordered locus">ECO103_1055</name>
</gene>
<protein>
    <recommendedName>
        <fullName evidence="1">Putative carbamate hydrolase RutD</fullName>
        <ecNumber evidence="1">3.5.1.-</ecNumber>
    </recommendedName>
    <alternativeName>
        <fullName evidence="1">Aminohydrolase</fullName>
    </alternativeName>
</protein>
<evidence type="ECO:0000255" key="1">
    <source>
        <dbReference type="HAMAP-Rule" id="MF_00832"/>
    </source>
</evidence>
<keyword id="KW-0378">Hydrolase</keyword>
<feature type="chain" id="PRO_0000402947" description="Putative carbamate hydrolase RutD">
    <location>
        <begin position="1"/>
        <end position="266"/>
    </location>
</feature>
<sequence>MKLSLSPPPYADAPVVVLISGLGGSGSYWLQQLAVLEQEYQVVCYDQRGTGNNPDTLAEDYSIAQMAAELHQALVAAGIEHYAVVGHALGALVGMQLALDYPASVTVLISVNGWLRINAHTRRCFQVRERLLYSGGAQAWVEAQPLFLYPADWMAARAPRLEAEDALALAHFQGKNNLLRRLNALKRADFSHHADRIRCPVQIICASDDLLVPTACSSELHAALPDSQKMVMPYGGHACNVTDPETFNALLLNGLASLLHHREAAL</sequence>
<dbReference type="EC" id="3.5.1.-" evidence="1"/>
<dbReference type="EMBL" id="AP010958">
    <property type="protein sequence ID" value="BAI29900.1"/>
    <property type="molecule type" value="Genomic_DNA"/>
</dbReference>
<dbReference type="RefSeq" id="WP_001299038.1">
    <property type="nucleotide sequence ID" value="NC_013353.1"/>
</dbReference>
<dbReference type="SMR" id="C8U5H1"/>
<dbReference type="ESTHER" id="ecoli-rutD">
    <property type="family name" value="RutD"/>
</dbReference>
<dbReference type="KEGG" id="eoh:ECO103_1055"/>
<dbReference type="HOGENOM" id="CLU_020336_50_1_6"/>
<dbReference type="GO" id="GO:0016811">
    <property type="term" value="F:hydrolase activity, acting on carbon-nitrogen (but not peptide) bonds, in linear amides"/>
    <property type="evidence" value="ECO:0007669"/>
    <property type="project" value="InterPro"/>
</dbReference>
<dbReference type="GO" id="GO:0019740">
    <property type="term" value="P:nitrogen utilization"/>
    <property type="evidence" value="ECO:0007669"/>
    <property type="project" value="UniProtKB-UniRule"/>
</dbReference>
<dbReference type="GO" id="GO:0006212">
    <property type="term" value="P:uracil catabolic process"/>
    <property type="evidence" value="ECO:0007669"/>
    <property type="project" value="UniProtKB-UniRule"/>
</dbReference>
<dbReference type="FunFam" id="3.40.50.1820:FF:000052">
    <property type="entry name" value="Putative aminoacrylate hydrolase RutD"/>
    <property type="match status" value="1"/>
</dbReference>
<dbReference type="Gene3D" id="3.40.50.1820">
    <property type="entry name" value="alpha/beta hydrolase"/>
    <property type="match status" value="1"/>
</dbReference>
<dbReference type="HAMAP" id="MF_00832">
    <property type="entry name" value="RutD"/>
    <property type="match status" value="1"/>
</dbReference>
<dbReference type="InterPro" id="IPR000073">
    <property type="entry name" value="AB_hydrolase_1"/>
</dbReference>
<dbReference type="InterPro" id="IPR029058">
    <property type="entry name" value="AB_hydrolase_fold"/>
</dbReference>
<dbReference type="InterPro" id="IPR050266">
    <property type="entry name" value="AB_hydrolase_sf"/>
</dbReference>
<dbReference type="InterPro" id="IPR019913">
    <property type="entry name" value="Pyrimidine_utilisation_RutD"/>
</dbReference>
<dbReference type="NCBIfam" id="TIGR03611">
    <property type="entry name" value="RutD"/>
    <property type="match status" value="1"/>
</dbReference>
<dbReference type="PANTHER" id="PTHR43798">
    <property type="entry name" value="MONOACYLGLYCEROL LIPASE"/>
    <property type="match status" value="1"/>
</dbReference>
<dbReference type="Pfam" id="PF00561">
    <property type="entry name" value="Abhydrolase_1"/>
    <property type="match status" value="1"/>
</dbReference>
<dbReference type="PRINTS" id="PR00111">
    <property type="entry name" value="ABHYDROLASE"/>
</dbReference>
<dbReference type="SUPFAM" id="SSF53474">
    <property type="entry name" value="alpha/beta-Hydrolases"/>
    <property type="match status" value="1"/>
</dbReference>
<comment type="function">
    <text evidence="1">Involved in pyrimidine catabolism. May facilitate the hydrolysis of carbamate, a reaction that can also occur spontaneously.</text>
</comment>
<comment type="catalytic activity">
    <reaction evidence="1">
        <text>carbamate + 2 H(+) = NH4(+) + CO2</text>
        <dbReference type="Rhea" id="RHEA:15649"/>
        <dbReference type="ChEBI" id="CHEBI:13941"/>
        <dbReference type="ChEBI" id="CHEBI:15378"/>
        <dbReference type="ChEBI" id="CHEBI:16526"/>
        <dbReference type="ChEBI" id="CHEBI:28938"/>
    </reaction>
</comment>
<comment type="induction">
    <text>Up-regulated by the nitrogen regulatory protein C (NtrC also called GlnG) and repressed by RutR.</text>
</comment>
<comment type="similarity">
    <text evidence="1">Belongs to the AB hydrolase superfamily. Hydrolase RutD family.</text>
</comment>
<name>RUTD_ECO10</name>
<reference key="1">
    <citation type="journal article" date="2009" name="Proc. Natl. Acad. Sci. U.S.A.">
        <title>Comparative genomics reveal the mechanism of the parallel evolution of O157 and non-O157 enterohemorrhagic Escherichia coli.</title>
        <authorList>
            <person name="Ogura Y."/>
            <person name="Ooka T."/>
            <person name="Iguchi A."/>
            <person name="Toh H."/>
            <person name="Asadulghani M."/>
            <person name="Oshima K."/>
            <person name="Kodama T."/>
            <person name="Abe H."/>
            <person name="Nakayama K."/>
            <person name="Kurokawa K."/>
            <person name="Tobe T."/>
            <person name="Hattori M."/>
            <person name="Hayashi T."/>
        </authorList>
    </citation>
    <scope>NUCLEOTIDE SEQUENCE [LARGE SCALE GENOMIC DNA]</scope>
    <source>
        <strain>12009 / EHEC</strain>
    </source>
</reference>